<organism>
    <name type="scientific">Mortierella isabellina</name>
    <name type="common">Filamentous fungus</name>
    <name type="synonym">Umbelopsis isabellina</name>
    <dbReference type="NCBI Taxonomy" id="91625"/>
    <lineage>
        <taxon>Eukaryota</taxon>
        <taxon>Fungi</taxon>
        <taxon>Fungi incertae sedis</taxon>
        <taxon>Mucoromycota</taxon>
        <taxon>Mucoromycotina</taxon>
        <taxon>Umbelopsidomycetes</taxon>
        <taxon>Umbelopsidales</taxon>
        <taxon>Umbelopsidaceae</taxon>
        <taxon>Umbelopsis</taxon>
    </lineage>
</organism>
<name>FAD12_MORIS</name>
<dbReference type="EC" id="1.14.19.6" evidence="1"/>
<dbReference type="EMBL" id="AF417245">
    <property type="protein sequence ID" value="AAL13301.1"/>
    <property type="molecule type" value="mRNA"/>
</dbReference>
<dbReference type="BRENDA" id="1.14.19.6">
    <property type="organism ID" value="9352"/>
</dbReference>
<dbReference type="UniPathway" id="UPA00658"/>
<dbReference type="GO" id="GO:0016020">
    <property type="term" value="C:membrane"/>
    <property type="evidence" value="ECO:0007669"/>
    <property type="project" value="UniProtKB-SubCell"/>
</dbReference>
<dbReference type="GO" id="GO:0102985">
    <property type="term" value="F:acyl-CoA (9+3)-desaturase activity"/>
    <property type="evidence" value="ECO:0007669"/>
    <property type="project" value="UniProtKB-EC"/>
</dbReference>
<dbReference type="GO" id="GO:0006636">
    <property type="term" value="P:unsaturated fatty acid biosynthetic process"/>
    <property type="evidence" value="ECO:0007669"/>
    <property type="project" value="UniProtKB-UniPathway"/>
</dbReference>
<dbReference type="CDD" id="cd03507">
    <property type="entry name" value="Delta12-FADS-like"/>
    <property type="match status" value="1"/>
</dbReference>
<dbReference type="InterPro" id="IPR005804">
    <property type="entry name" value="FA_desaturase_dom"/>
</dbReference>
<dbReference type="InterPro" id="IPR012171">
    <property type="entry name" value="Fatty_acid_desaturase"/>
</dbReference>
<dbReference type="PANTHER" id="PTHR32100">
    <property type="entry name" value="OMEGA-6 FATTY ACID DESATURASE, CHLOROPLASTIC"/>
    <property type="match status" value="1"/>
</dbReference>
<dbReference type="Pfam" id="PF00487">
    <property type="entry name" value="FA_desaturase"/>
    <property type="match status" value="1"/>
</dbReference>
<sequence>MAPPNTIDAGLTQRHITTTAAPTSAKPAFERNYQLPEFTIKEIRECIPAHCFERSGLRGLCHVAIDLTWASLLFLAATQIDKFENPLIRYLAWPAYWIMQGIVCTGIWVLAHECGHQSFSTSKTLNNTVGWILHSMLLVPYHSWRISHSKHHKATGHMTKDQVFVPKTRSQVGLPPKESAAAAVQEEDMSVHLDEEAPIVTLFWMVIQFLFGWPAYLIMNASGQDYGRWTSHFHTYSPIFEPRNFFDIIISDLGVLAALGALIYASMQLSLLTVTKYYIIPYLFVNFWLVLITFLQHTDPKLPHYREGAWNFQRGALCTVDRSFGKFLDHMFHGIVHTHVAHHLFSQMPFYHAEEATYHLKKLLGEYYVYDPSPIVVAVWRSFRECRFVEDHGDVVFFKK</sequence>
<keyword id="KW-0275">Fatty acid biosynthesis</keyword>
<keyword id="KW-0276">Fatty acid metabolism</keyword>
<keyword id="KW-0444">Lipid biosynthesis</keyword>
<keyword id="KW-0443">Lipid metabolism</keyword>
<keyword id="KW-0472">Membrane</keyword>
<keyword id="KW-0560">Oxidoreductase</keyword>
<keyword id="KW-0677">Repeat</keyword>
<keyword id="KW-0812">Transmembrane</keyword>
<keyword id="KW-1133">Transmembrane helix</keyword>
<proteinExistence type="evidence at transcript level"/>
<accession>P59668</accession>
<comment type="function">
    <text evidence="1">Catalyzes the desaturation of oleic acid (Delta(9)-18:1) to linoleic acid (Delta(9), Delta(12)-18:2).</text>
</comment>
<comment type="catalytic activity">
    <reaction evidence="1">
        <text>(9Z)-octadecenoyl-CoA + 2 Fe(II)-[cytochrome b5] + O2 + 2 H(+) = (9Z,12Z)-octadecadienoyl-CoA + 2 Fe(III)-[cytochrome b5] + 2 H2O</text>
        <dbReference type="Rhea" id="RHEA:25856"/>
        <dbReference type="Rhea" id="RHEA-COMP:10438"/>
        <dbReference type="Rhea" id="RHEA-COMP:10439"/>
        <dbReference type="ChEBI" id="CHEBI:15377"/>
        <dbReference type="ChEBI" id="CHEBI:15378"/>
        <dbReference type="ChEBI" id="CHEBI:15379"/>
        <dbReference type="ChEBI" id="CHEBI:29033"/>
        <dbReference type="ChEBI" id="CHEBI:29034"/>
        <dbReference type="ChEBI" id="CHEBI:57383"/>
        <dbReference type="ChEBI" id="CHEBI:57387"/>
        <dbReference type="EC" id="1.14.19.6"/>
    </reaction>
</comment>
<comment type="catalytic activity">
    <reaction evidence="1">
        <text>(9Z)-hexadecenoyl-CoA + 2 Fe(II)-[cytochrome b5] + O2 + 2 H(+) = (9Z,12Z)-hexadecadienoyl-CoA + 2 Fe(III)-[cytochrome b5] + 2 H2O</text>
        <dbReference type="Rhea" id="RHEA:45096"/>
        <dbReference type="Rhea" id="RHEA-COMP:10438"/>
        <dbReference type="Rhea" id="RHEA-COMP:10439"/>
        <dbReference type="ChEBI" id="CHEBI:15377"/>
        <dbReference type="ChEBI" id="CHEBI:15378"/>
        <dbReference type="ChEBI" id="CHEBI:15379"/>
        <dbReference type="ChEBI" id="CHEBI:29033"/>
        <dbReference type="ChEBI" id="CHEBI:29034"/>
        <dbReference type="ChEBI" id="CHEBI:61540"/>
        <dbReference type="ChEBI" id="CHEBI:76552"/>
        <dbReference type="EC" id="1.14.19.6"/>
    </reaction>
</comment>
<comment type="pathway">
    <text>Lipid metabolism; polyunsaturated fatty acid biosynthesis.</text>
</comment>
<comment type="subcellular location">
    <subcellularLocation>
        <location evidence="3">Membrane</location>
        <topology evidence="3">Multi-pass membrane protein</topology>
    </subcellularLocation>
</comment>
<comment type="domain">
    <text>The histidine box domains may contain the active site and/or be involved in metal ion binding.</text>
</comment>
<comment type="similarity">
    <text evidence="3">Belongs to the fatty acid desaturase type 1 family.</text>
</comment>
<evidence type="ECO:0000250" key="1">
    <source>
        <dbReference type="UniProtKB" id="Q9Y8H5"/>
    </source>
</evidence>
<evidence type="ECO:0000255" key="2"/>
<evidence type="ECO:0000305" key="3"/>
<feature type="chain" id="PRO_0000185423" description="Delta(12) fatty acid desaturase">
    <location>
        <begin position="1"/>
        <end position="400"/>
    </location>
</feature>
<feature type="transmembrane region" description="Helical" evidence="2">
    <location>
        <begin position="91"/>
        <end position="111"/>
    </location>
</feature>
<feature type="transmembrane region" description="Helical" evidence="2">
    <location>
        <begin position="199"/>
        <end position="219"/>
    </location>
</feature>
<feature type="transmembrane region" description="Helical" evidence="2">
    <location>
        <begin position="245"/>
        <end position="265"/>
    </location>
</feature>
<feature type="transmembrane region" description="Helical" evidence="2">
    <location>
        <begin position="277"/>
        <end position="297"/>
    </location>
</feature>
<feature type="short sequence motif" description="Histidine box-1">
    <location>
        <begin position="112"/>
        <end position="116"/>
    </location>
</feature>
<feature type="short sequence motif" description="Histidine box-2">
    <location>
        <begin position="148"/>
        <end position="152"/>
    </location>
</feature>
<feature type="short sequence motif" description="Histidine box-3">
    <location>
        <begin position="339"/>
        <end position="343"/>
    </location>
</feature>
<reference key="1">
    <citation type="submission" date="2001-09" db="EMBL/GenBank/DDBJ databases">
        <title>Delta 12 fatty acid desaturase mRNA of Mortierella isabellina.</title>
        <authorList>
            <person name="Liu L."/>
            <person name="Li M."/>
            <person name="Xing L."/>
            <person name="Hu G."/>
        </authorList>
    </citation>
    <scope>NUCLEOTIDE SEQUENCE [MRNA]</scope>
    <source>
        <strain>M6-22</strain>
    </source>
</reference>
<protein>
    <recommendedName>
        <fullName>Delta(12) fatty acid desaturase</fullName>
        <ecNumber evidence="1">1.14.19.6</ecNumber>
    </recommendedName>
    <alternativeName>
        <fullName>Delta-12 fatty acid desaturase</fullName>
    </alternativeName>
</protein>